<dbReference type="EC" id="3.1.3.5" evidence="1"/>
<dbReference type="EC" id="3.1.3.6" evidence="1"/>
<dbReference type="EC" id="3.6.1.11" evidence="1"/>
<dbReference type="EMBL" id="BX936398">
    <property type="protein sequence ID" value="CAH20013.1"/>
    <property type="molecule type" value="Genomic_DNA"/>
</dbReference>
<dbReference type="RefSeq" id="WP_011191778.1">
    <property type="nucleotide sequence ID" value="NC_006155.1"/>
</dbReference>
<dbReference type="SMR" id="Q66EC0"/>
<dbReference type="GeneID" id="49787219"/>
<dbReference type="KEGG" id="ypo:BZ17_1783"/>
<dbReference type="KEGG" id="yps:YPTB0773"/>
<dbReference type="PATRIC" id="fig|273123.14.peg.1888"/>
<dbReference type="Proteomes" id="UP000001011">
    <property type="component" value="Chromosome"/>
</dbReference>
<dbReference type="GO" id="GO:0005737">
    <property type="term" value="C:cytoplasm"/>
    <property type="evidence" value="ECO:0007669"/>
    <property type="project" value="UniProtKB-SubCell"/>
</dbReference>
<dbReference type="GO" id="GO:0008254">
    <property type="term" value="F:3'-nucleotidase activity"/>
    <property type="evidence" value="ECO:0007669"/>
    <property type="project" value="UniProtKB-UniRule"/>
</dbReference>
<dbReference type="GO" id="GO:0008253">
    <property type="term" value="F:5'-nucleotidase activity"/>
    <property type="evidence" value="ECO:0007669"/>
    <property type="project" value="UniProtKB-UniRule"/>
</dbReference>
<dbReference type="GO" id="GO:0004309">
    <property type="term" value="F:exopolyphosphatase activity"/>
    <property type="evidence" value="ECO:0007669"/>
    <property type="project" value="UniProtKB-UniRule"/>
</dbReference>
<dbReference type="GO" id="GO:0046872">
    <property type="term" value="F:metal ion binding"/>
    <property type="evidence" value="ECO:0007669"/>
    <property type="project" value="UniProtKB-UniRule"/>
</dbReference>
<dbReference type="GO" id="GO:0000166">
    <property type="term" value="F:nucleotide binding"/>
    <property type="evidence" value="ECO:0007669"/>
    <property type="project" value="UniProtKB-KW"/>
</dbReference>
<dbReference type="FunFam" id="3.40.1210.10:FF:000001">
    <property type="entry name" value="5'/3'-nucleotidase SurE"/>
    <property type="match status" value="1"/>
</dbReference>
<dbReference type="Gene3D" id="3.40.1210.10">
    <property type="entry name" value="Survival protein SurE-like phosphatase/nucleotidase"/>
    <property type="match status" value="1"/>
</dbReference>
<dbReference type="HAMAP" id="MF_00060">
    <property type="entry name" value="SurE"/>
    <property type="match status" value="1"/>
</dbReference>
<dbReference type="InterPro" id="IPR030048">
    <property type="entry name" value="SurE"/>
</dbReference>
<dbReference type="InterPro" id="IPR002828">
    <property type="entry name" value="SurE-like_Pase/nucleotidase"/>
</dbReference>
<dbReference type="InterPro" id="IPR036523">
    <property type="entry name" value="SurE-like_sf"/>
</dbReference>
<dbReference type="NCBIfam" id="NF001488">
    <property type="entry name" value="PRK00346.1-1"/>
    <property type="match status" value="1"/>
</dbReference>
<dbReference type="NCBIfam" id="NF001489">
    <property type="entry name" value="PRK00346.1-3"/>
    <property type="match status" value="1"/>
</dbReference>
<dbReference type="NCBIfam" id="NF001490">
    <property type="entry name" value="PRK00346.1-4"/>
    <property type="match status" value="1"/>
</dbReference>
<dbReference type="NCBIfam" id="TIGR00087">
    <property type="entry name" value="surE"/>
    <property type="match status" value="1"/>
</dbReference>
<dbReference type="PANTHER" id="PTHR30457">
    <property type="entry name" value="5'-NUCLEOTIDASE SURE"/>
    <property type="match status" value="1"/>
</dbReference>
<dbReference type="PANTHER" id="PTHR30457:SF12">
    <property type="entry name" value="5'_3'-NUCLEOTIDASE SURE"/>
    <property type="match status" value="1"/>
</dbReference>
<dbReference type="Pfam" id="PF01975">
    <property type="entry name" value="SurE"/>
    <property type="match status" value="1"/>
</dbReference>
<dbReference type="SUPFAM" id="SSF64167">
    <property type="entry name" value="SurE-like"/>
    <property type="match status" value="1"/>
</dbReference>
<protein>
    <recommendedName>
        <fullName evidence="1">5'/3'-nucleotidase SurE</fullName>
        <ecNumber evidence="1">3.1.3.5</ecNumber>
        <ecNumber evidence="1">3.1.3.6</ecNumber>
    </recommendedName>
    <alternativeName>
        <fullName evidence="1">Exopolyphosphatase</fullName>
        <ecNumber evidence="1">3.6.1.11</ecNumber>
    </alternativeName>
    <alternativeName>
        <fullName evidence="1">Nucleoside monophosphate phosphohydrolase</fullName>
    </alternativeName>
</protein>
<organism>
    <name type="scientific">Yersinia pseudotuberculosis serotype I (strain IP32953)</name>
    <dbReference type="NCBI Taxonomy" id="273123"/>
    <lineage>
        <taxon>Bacteria</taxon>
        <taxon>Pseudomonadati</taxon>
        <taxon>Pseudomonadota</taxon>
        <taxon>Gammaproteobacteria</taxon>
        <taxon>Enterobacterales</taxon>
        <taxon>Yersiniaceae</taxon>
        <taxon>Yersinia</taxon>
    </lineage>
</organism>
<keyword id="KW-0963">Cytoplasm</keyword>
<keyword id="KW-0378">Hydrolase</keyword>
<keyword id="KW-0479">Metal-binding</keyword>
<keyword id="KW-0547">Nucleotide-binding</keyword>
<feature type="chain" id="PRO_0000235673" description="5'/3'-nucleotidase SurE">
    <location>
        <begin position="1"/>
        <end position="254"/>
    </location>
</feature>
<feature type="binding site" evidence="1">
    <location>
        <position position="9"/>
    </location>
    <ligand>
        <name>a divalent metal cation</name>
        <dbReference type="ChEBI" id="CHEBI:60240"/>
    </ligand>
</feature>
<feature type="binding site" evidence="1">
    <location>
        <position position="10"/>
    </location>
    <ligand>
        <name>a divalent metal cation</name>
        <dbReference type="ChEBI" id="CHEBI:60240"/>
    </ligand>
</feature>
<feature type="binding site" evidence="1">
    <location>
        <position position="40"/>
    </location>
    <ligand>
        <name>a divalent metal cation</name>
        <dbReference type="ChEBI" id="CHEBI:60240"/>
    </ligand>
</feature>
<feature type="binding site" evidence="1">
    <location>
        <position position="93"/>
    </location>
    <ligand>
        <name>a divalent metal cation</name>
        <dbReference type="ChEBI" id="CHEBI:60240"/>
    </ligand>
</feature>
<reference key="1">
    <citation type="journal article" date="2004" name="Proc. Natl. Acad. Sci. U.S.A.">
        <title>Insights into the evolution of Yersinia pestis through whole-genome comparison with Yersinia pseudotuberculosis.</title>
        <authorList>
            <person name="Chain P.S.G."/>
            <person name="Carniel E."/>
            <person name="Larimer F.W."/>
            <person name="Lamerdin J."/>
            <person name="Stoutland P.O."/>
            <person name="Regala W.M."/>
            <person name="Georgescu A.M."/>
            <person name="Vergez L.M."/>
            <person name="Land M.L."/>
            <person name="Motin V.L."/>
            <person name="Brubaker R.R."/>
            <person name="Fowler J."/>
            <person name="Hinnebusch J."/>
            <person name="Marceau M."/>
            <person name="Medigue C."/>
            <person name="Simonet M."/>
            <person name="Chenal-Francisque V."/>
            <person name="Souza B."/>
            <person name="Dacheux D."/>
            <person name="Elliott J.M."/>
            <person name="Derbise A."/>
            <person name="Hauser L.J."/>
            <person name="Garcia E."/>
        </authorList>
    </citation>
    <scope>NUCLEOTIDE SEQUENCE [LARGE SCALE GENOMIC DNA]</scope>
    <source>
        <strain>IP32953</strain>
    </source>
</reference>
<proteinExistence type="inferred from homology"/>
<comment type="function">
    <text evidence="1">Nucleotidase with a broad substrate specificity as it can dephosphorylate various ribo- and deoxyribonucleoside 5'-monophosphates and ribonucleoside 3'-monophosphates with highest affinity to 3'-AMP. Also hydrolyzes polyphosphate (exopolyphosphatase activity) with the preference for short-chain-length substrates (P20-25). Might be involved in the regulation of dNTP and NTP pools, and in the turnover of 3'-mononucleotides produced by numerous intracellular RNases (T1, T2, and F) during the degradation of various RNAs.</text>
</comment>
<comment type="catalytic activity">
    <reaction evidence="1">
        <text>a ribonucleoside 5'-phosphate + H2O = a ribonucleoside + phosphate</text>
        <dbReference type="Rhea" id="RHEA:12484"/>
        <dbReference type="ChEBI" id="CHEBI:15377"/>
        <dbReference type="ChEBI" id="CHEBI:18254"/>
        <dbReference type="ChEBI" id="CHEBI:43474"/>
        <dbReference type="ChEBI" id="CHEBI:58043"/>
        <dbReference type="EC" id="3.1.3.5"/>
    </reaction>
</comment>
<comment type="catalytic activity">
    <reaction evidence="1">
        <text>a ribonucleoside 3'-phosphate + H2O = a ribonucleoside + phosphate</text>
        <dbReference type="Rhea" id="RHEA:10144"/>
        <dbReference type="ChEBI" id="CHEBI:13197"/>
        <dbReference type="ChEBI" id="CHEBI:15377"/>
        <dbReference type="ChEBI" id="CHEBI:18254"/>
        <dbReference type="ChEBI" id="CHEBI:43474"/>
        <dbReference type="EC" id="3.1.3.6"/>
    </reaction>
</comment>
<comment type="catalytic activity">
    <reaction evidence="1">
        <text>[phosphate](n) + H2O = [phosphate](n-1) + phosphate + H(+)</text>
        <dbReference type="Rhea" id="RHEA:21528"/>
        <dbReference type="Rhea" id="RHEA-COMP:9859"/>
        <dbReference type="Rhea" id="RHEA-COMP:14279"/>
        <dbReference type="ChEBI" id="CHEBI:15377"/>
        <dbReference type="ChEBI" id="CHEBI:15378"/>
        <dbReference type="ChEBI" id="CHEBI:16838"/>
        <dbReference type="ChEBI" id="CHEBI:43474"/>
        <dbReference type="EC" id="3.6.1.11"/>
    </reaction>
</comment>
<comment type="cofactor">
    <cofactor evidence="1">
        <name>a divalent metal cation</name>
        <dbReference type="ChEBI" id="CHEBI:60240"/>
    </cofactor>
    <text evidence="1">Binds 1 divalent metal cation per subunit.</text>
</comment>
<comment type="subcellular location">
    <subcellularLocation>
        <location evidence="1">Cytoplasm</location>
    </subcellularLocation>
</comment>
<comment type="similarity">
    <text evidence="1">Belongs to the SurE nucleotidase family.</text>
</comment>
<evidence type="ECO:0000255" key="1">
    <source>
        <dbReference type="HAMAP-Rule" id="MF_00060"/>
    </source>
</evidence>
<sequence>MIRILLSNDDGISAPGIQTLASALREFAQVQIVAPDRNRSGASNALTLDSALRITTLSNGDIAVQQGTPTDCVYLGVNALMRPRPDIVVSGINAGPNLGDDVIYSGTVAAAMEGRHLGYPALAVSLNGHQHYDTAAAVTCRLLRALQRKPLRTGKILNINVPDLPLSEIKGIRVTRCGSRHPAEQVFCQQDPRGQDLYWIGPPGEKYDAGPDTDFAAVEQGYVSITPLQVDLTAYTAQEVVESWLANTEVDGEW</sequence>
<gene>
    <name evidence="1" type="primary">surE</name>
    <name type="ordered locus">YPTB0773</name>
</gene>
<accession>Q66EC0</accession>
<name>SURE_YERPS</name>